<comment type="function">
    <text evidence="1">This protein binds to the 23S rRNA, and is important in its secondary structure. It is located near the subunit interface in the base of the L7/L12 stalk, and near the tRNA binding site of the peptidyltransferase center.</text>
</comment>
<comment type="subunit">
    <text evidence="1">Part of the 50S ribosomal subunit.</text>
</comment>
<comment type="similarity">
    <text evidence="1">Belongs to the universal ribosomal protein uL6 family.</text>
</comment>
<reference key="1">
    <citation type="submission" date="2007-10" db="EMBL/GenBank/DDBJ databases">
        <title>Complete sequence of Salinispora arenicola CNS-205.</title>
        <authorList>
            <consortium name="US DOE Joint Genome Institute"/>
            <person name="Copeland A."/>
            <person name="Lucas S."/>
            <person name="Lapidus A."/>
            <person name="Barry K."/>
            <person name="Glavina del Rio T."/>
            <person name="Dalin E."/>
            <person name="Tice H."/>
            <person name="Pitluck S."/>
            <person name="Foster B."/>
            <person name="Schmutz J."/>
            <person name="Larimer F."/>
            <person name="Land M."/>
            <person name="Hauser L."/>
            <person name="Kyrpides N."/>
            <person name="Ivanova N."/>
            <person name="Jensen P.R."/>
            <person name="Moore B.S."/>
            <person name="Penn K."/>
            <person name="Jenkins C."/>
            <person name="Udwary D."/>
            <person name="Xiang L."/>
            <person name="Gontang E."/>
            <person name="Richardson P."/>
        </authorList>
    </citation>
    <scope>NUCLEOTIDE SEQUENCE [LARGE SCALE GENOMIC DNA]</scope>
    <source>
        <strain>CNS-205</strain>
    </source>
</reference>
<organism>
    <name type="scientific">Salinispora arenicola (strain CNS-205)</name>
    <dbReference type="NCBI Taxonomy" id="391037"/>
    <lineage>
        <taxon>Bacteria</taxon>
        <taxon>Bacillati</taxon>
        <taxon>Actinomycetota</taxon>
        <taxon>Actinomycetes</taxon>
        <taxon>Micromonosporales</taxon>
        <taxon>Micromonosporaceae</taxon>
        <taxon>Salinispora</taxon>
    </lineage>
</organism>
<evidence type="ECO:0000255" key="1">
    <source>
        <dbReference type="HAMAP-Rule" id="MF_01365"/>
    </source>
</evidence>
<evidence type="ECO:0000305" key="2"/>
<sequence length="180" mass="19372">MSRIGRKSIPVPAGVDVTIDGQTVKVKGPKGELSHTLAEPITVERAEDGQLNVARPNDERKAKELHGLSRTLVANMIVGVTEGYRKSLEIAGTGYRVTAKGKDLEFALGFSHPVTVVAPEGITFSVEKPTLFHVAGINKQLVGEVAANIRKIRPPEPYKGKGVKYQGEVIRRKAGKAGKK</sequence>
<protein>
    <recommendedName>
        <fullName evidence="1">Large ribosomal subunit protein uL6</fullName>
    </recommendedName>
    <alternativeName>
        <fullName evidence="2">50S ribosomal protein L6</fullName>
    </alternativeName>
</protein>
<accession>A8M514</accession>
<feature type="chain" id="PRO_1000087060" description="Large ribosomal subunit protein uL6">
    <location>
        <begin position="1"/>
        <end position="180"/>
    </location>
</feature>
<name>RL6_SALAI</name>
<proteinExistence type="inferred from homology"/>
<keyword id="KW-0687">Ribonucleoprotein</keyword>
<keyword id="KW-0689">Ribosomal protein</keyword>
<keyword id="KW-0694">RNA-binding</keyword>
<keyword id="KW-0699">rRNA-binding</keyword>
<gene>
    <name evidence="1" type="primary">rplF</name>
    <name type="ordered locus">Sare_4300</name>
</gene>
<dbReference type="EMBL" id="CP000850">
    <property type="protein sequence ID" value="ABW00082.1"/>
    <property type="molecule type" value="Genomic_DNA"/>
</dbReference>
<dbReference type="SMR" id="A8M514"/>
<dbReference type="STRING" id="391037.Sare_4300"/>
<dbReference type="KEGG" id="saq:Sare_4300"/>
<dbReference type="PATRIC" id="fig|391037.6.peg.4341"/>
<dbReference type="eggNOG" id="COG0097">
    <property type="taxonomic scope" value="Bacteria"/>
</dbReference>
<dbReference type="HOGENOM" id="CLU_065464_1_2_11"/>
<dbReference type="OrthoDB" id="9805007at2"/>
<dbReference type="GO" id="GO:0022625">
    <property type="term" value="C:cytosolic large ribosomal subunit"/>
    <property type="evidence" value="ECO:0007669"/>
    <property type="project" value="TreeGrafter"/>
</dbReference>
<dbReference type="GO" id="GO:0019843">
    <property type="term" value="F:rRNA binding"/>
    <property type="evidence" value="ECO:0007669"/>
    <property type="project" value="UniProtKB-UniRule"/>
</dbReference>
<dbReference type="GO" id="GO:0003735">
    <property type="term" value="F:structural constituent of ribosome"/>
    <property type="evidence" value="ECO:0007669"/>
    <property type="project" value="InterPro"/>
</dbReference>
<dbReference type="GO" id="GO:0002181">
    <property type="term" value="P:cytoplasmic translation"/>
    <property type="evidence" value="ECO:0007669"/>
    <property type="project" value="TreeGrafter"/>
</dbReference>
<dbReference type="FunFam" id="3.90.930.12:FF:000001">
    <property type="entry name" value="50S ribosomal protein L6"/>
    <property type="match status" value="1"/>
</dbReference>
<dbReference type="FunFam" id="3.90.930.12:FF:000002">
    <property type="entry name" value="50S ribosomal protein L6"/>
    <property type="match status" value="1"/>
</dbReference>
<dbReference type="Gene3D" id="3.90.930.12">
    <property type="entry name" value="Ribosomal protein L6, alpha-beta domain"/>
    <property type="match status" value="2"/>
</dbReference>
<dbReference type="HAMAP" id="MF_01365_B">
    <property type="entry name" value="Ribosomal_uL6_B"/>
    <property type="match status" value="1"/>
</dbReference>
<dbReference type="InterPro" id="IPR000702">
    <property type="entry name" value="Ribosomal_uL6-like"/>
</dbReference>
<dbReference type="InterPro" id="IPR036789">
    <property type="entry name" value="Ribosomal_uL6-like_a/b-dom_sf"/>
</dbReference>
<dbReference type="InterPro" id="IPR020040">
    <property type="entry name" value="Ribosomal_uL6_a/b-dom"/>
</dbReference>
<dbReference type="InterPro" id="IPR019906">
    <property type="entry name" value="Ribosomal_uL6_bac-type"/>
</dbReference>
<dbReference type="InterPro" id="IPR002358">
    <property type="entry name" value="Ribosomal_uL6_CS"/>
</dbReference>
<dbReference type="NCBIfam" id="TIGR03654">
    <property type="entry name" value="L6_bact"/>
    <property type="match status" value="1"/>
</dbReference>
<dbReference type="PANTHER" id="PTHR11655">
    <property type="entry name" value="60S/50S RIBOSOMAL PROTEIN L6/L9"/>
    <property type="match status" value="1"/>
</dbReference>
<dbReference type="PANTHER" id="PTHR11655:SF14">
    <property type="entry name" value="LARGE RIBOSOMAL SUBUNIT PROTEIN UL6M"/>
    <property type="match status" value="1"/>
</dbReference>
<dbReference type="Pfam" id="PF00347">
    <property type="entry name" value="Ribosomal_L6"/>
    <property type="match status" value="2"/>
</dbReference>
<dbReference type="PIRSF" id="PIRSF002162">
    <property type="entry name" value="Ribosomal_L6"/>
    <property type="match status" value="1"/>
</dbReference>
<dbReference type="PRINTS" id="PR00059">
    <property type="entry name" value="RIBOSOMALL6"/>
</dbReference>
<dbReference type="SUPFAM" id="SSF56053">
    <property type="entry name" value="Ribosomal protein L6"/>
    <property type="match status" value="2"/>
</dbReference>
<dbReference type="PROSITE" id="PS00525">
    <property type="entry name" value="RIBOSOMAL_L6_1"/>
    <property type="match status" value="1"/>
</dbReference>